<comment type="subcellular location">
    <subcellularLocation>
        <location evidence="1">Cell inner membrane</location>
        <topology evidence="1">Multi-pass membrane protein</topology>
    </subcellularLocation>
</comment>
<comment type="similarity">
    <text evidence="1">Belongs to the major facilitator superfamily. YcaD (TC 2.A.1.26) family.</text>
</comment>
<accession>Q0T8J4</accession>
<evidence type="ECO:0000255" key="1">
    <source>
        <dbReference type="HAMAP-Rule" id="MF_01149"/>
    </source>
</evidence>
<feature type="chain" id="PRO_1000065497" description="Uncharacterized MFS-type transporter YcaD">
    <location>
        <begin position="1"/>
        <end position="382"/>
    </location>
</feature>
<feature type="transmembrane region" description="Helical" evidence="1">
    <location>
        <begin position="14"/>
        <end position="34"/>
    </location>
</feature>
<feature type="transmembrane region" description="Helical" evidence="1">
    <location>
        <begin position="45"/>
        <end position="65"/>
    </location>
</feature>
<feature type="transmembrane region" description="Helical" evidence="1">
    <location>
        <begin position="79"/>
        <end position="99"/>
    </location>
</feature>
<feature type="transmembrane region" description="Helical" evidence="1">
    <location>
        <begin position="102"/>
        <end position="122"/>
    </location>
</feature>
<feature type="transmembrane region" description="Helical" evidence="1">
    <location>
        <begin position="131"/>
        <end position="151"/>
    </location>
</feature>
<feature type="transmembrane region" description="Helical" evidence="1">
    <location>
        <begin position="157"/>
        <end position="177"/>
    </location>
</feature>
<feature type="transmembrane region" description="Helical" evidence="1">
    <location>
        <begin position="204"/>
        <end position="224"/>
    </location>
</feature>
<feature type="transmembrane region" description="Helical" evidence="1">
    <location>
        <begin position="235"/>
        <end position="255"/>
    </location>
</feature>
<feature type="transmembrane region" description="Helical" evidence="1">
    <location>
        <begin position="270"/>
        <end position="290"/>
    </location>
</feature>
<feature type="transmembrane region" description="Helical" evidence="1">
    <location>
        <begin position="291"/>
        <end position="311"/>
    </location>
</feature>
<feature type="transmembrane region" description="Helical" evidence="1">
    <location>
        <begin position="325"/>
        <end position="345"/>
    </location>
</feature>
<feature type="transmembrane region" description="Helical" evidence="1">
    <location>
        <begin position="348"/>
        <end position="368"/>
    </location>
</feature>
<protein>
    <recommendedName>
        <fullName evidence="1">Uncharacterized MFS-type transporter YcaD</fullName>
    </recommendedName>
</protein>
<dbReference type="EMBL" id="CP000266">
    <property type="protein sequence ID" value="ABF03113.1"/>
    <property type="molecule type" value="Genomic_DNA"/>
</dbReference>
<dbReference type="RefSeq" id="WP_000109301.1">
    <property type="nucleotide sequence ID" value="NC_008258.1"/>
</dbReference>
<dbReference type="SMR" id="Q0T8J4"/>
<dbReference type="KEGG" id="sfv:SFV_0889"/>
<dbReference type="HOGENOM" id="CLU_035018_1_2_6"/>
<dbReference type="Proteomes" id="UP000000659">
    <property type="component" value="Chromosome"/>
</dbReference>
<dbReference type="GO" id="GO:0005886">
    <property type="term" value="C:plasma membrane"/>
    <property type="evidence" value="ECO:0007669"/>
    <property type="project" value="UniProtKB-SubCell"/>
</dbReference>
<dbReference type="GO" id="GO:0022857">
    <property type="term" value="F:transmembrane transporter activity"/>
    <property type="evidence" value="ECO:0007669"/>
    <property type="project" value="UniProtKB-UniRule"/>
</dbReference>
<dbReference type="CDD" id="cd17477">
    <property type="entry name" value="MFS_YcaD_like"/>
    <property type="match status" value="1"/>
</dbReference>
<dbReference type="FunFam" id="1.20.1250.20:FF:000041">
    <property type="entry name" value="Uncharacterized MFS-type transporter YcaD"/>
    <property type="match status" value="1"/>
</dbReference>
<dbReference type="FunFam" id="1.20.1250.20:FF:000066">
    <property type="entry name" value="Uncharacterized MFS-type transporter YcaD"/>
    <property type="match status" value="1"/>
</dbReference>
<dbReference type="Gene3D" id="1.20.1250.20">
    <property type="entry name" value="MFS general substrate transporter like domains"/>
    <property type="match status" value="2"/>
</dbReference>
<dbReference type="HAMAP" id="MF_01149">
    <property type="entry name" value="MFS_YcaD"/>
    <property type="match status" value="1"/>
</dbReference>
<dbReference type="InterPro" id="IPR011701">
    <property type="entry name" value="MFS"/>
</dbReference>
<dbReference type="InterPro" id="IPR020846">
    <property type="entry name" value="MFS_dom"/>
</dbReference>
<dbReference type="InterPro" id="IPR036259">
    <property type="entry name" value="MFS_trans_sf"/>
</dbReference>
<dbReference type="InterPro" id="IPR023745">
    <property type="entry name" value="MFS_YcaD"/>
</dbReference>
<dbReference type="InterPro" id="IPR047200">
    <property type="entry name" value="MFS_YcaD-like"/>
</dbReference>
<dbReference type="NCBIfam" id="NF002962">
    <property type="entry name" value="PRK03633.1"/>
    <property type="match status" value="1"/>
</dbReference>
<dbReference type="PANTHER" id="PTHR23521">
    <property type="entry name" value="TRANSPORTER MFS SUPERFAMILY"/>
    <property type="match status" value="1"/>
</dbReference>
<dbReference type="PANTHER" id="PTHR23521:SF2">
    <property type="entry name" value="TRANSPORTER MFS SUPERFAMILY"/>
    <property type="match status" value="1"/>
</dbReference>
<dbReference type="Pfam" id="PF07690">
    <property type="entry name" value="MFS_1"/>
    <property type="match status" value="1"/>
</dbReference>
<dbReference type="SUPFAM" id="SSF103473">
    <property type="entry name" value="MFS general substrate transporter"/>
    <property type="match status" value="1"/>
</dbReference>
<dbReference type="PROSITE" id="PS50850">
    <property type="entry name" value="MFS"/>
    <property type="match status" value="1"/>
</dbReference>
<name>YCAD_SHIF8</name>
<gene>
    <name evidence="1" type="primary">ycaD</name>
    <name type="ordered locus">SFV_0889</name>
</gene>
<organism>
    <name type="scientific">Shigella flexneri serotype 5b (strain 8401)</name>
    <dbReference type="NCBI Taxonomy" id="373384"/>
    <lineage>
        <taxon>Bacteria</taxon>
        <taxon>Pseudomonadati</taxon>
        <taxon>Pseudomonadota</taxon>
        <taxon>Gammaproteobacteria</taxon>
        <taxon>Enterobacterales</taxon>
        <taxon>Enterobacteriaceae</taxon>
        <taxon>Shigella</taxon>
    </lineage>
</organism>
<keyword id="KW-0997">Cell inner membrane</keyword>
<keyword id="KW-1003">Cell membrane</keyword>
<keyword id="KW-0472">Membrane</keyword>
<keyword id="KW-0812">Transmembrane</keyword>
<keyword id="KW-1133">Transmembrane helix</keyword>
<keyword id="KW-0813">Transport</keyword>
<proteinExistence type="inferred from homology"/>
<reference key="1">
    <citation type="journal article" date="2006" name="BMC Genomics">
        <title>Complete genome sequence of Shigella flexneri 5b and comparison with Shigella flexneri 2a.</title>
        <authorList>
            <person name="Nie H."/>
            <person name="Yang F."/>
            <person name="Zhang X."/>
            <person name="Yang J."/>
            <person name="Chen L."/>
            <person name="Wang J."/>
            <person name="Xiong Z."/>
            <person name="Peng J."/>
            <person name="Sun L."/>
            <person name="Dong J."/>
            <person name="Xue Y."/>
            <person name="Xu X."/>
            <person name="Chen S."/>
            <person name="Yao Z."/>
            <person name="Shen Y."/>
            <person name="Jin Q."/>
        </authorList>
    </citation>
    <scope>NUCLEOTIDE SEQUENCE [LARGE SCALE GENOMIC DNA]</scope>
    <source>
        <strain>8401</strain>
    </source>
</reference>
<sequence length="382" mass="41446">MSTYTRPVMLLLSGLLLLTLAIAVLNTLVPLWLAQEHMSTWQVGVVSSSYFTGNLVGTLLTGYVIKRIGFNRSYYLSSFIFAAGCAGLGLMIGFWSWLAWRFVAGVGCAMIWVVVESALMCSGTSRNRGRLLAAYMMVYYVGTFLGQLLVSKVSTELMSVLPWVTGLTLAGILPLLFTRVLNQQAENHDSTSITAMLKLRQARLGVNGCIISGIVLGSLYGLMPLYLNHKGVSNASIGFWMAVLVSAGILGQWPIGRLADKFGRLLVLRVQVFVVILGSIAMLSQAAMAPALFILGAAGFTLYPVAMAWACEKVEHHQLVAMNQALLLSYTVGSLLGPSFSAMLMQNFSDNLLFIMIASVSFIYLLMLLRNAGHTPKPVAHV</sequence>